<dbReference type="EC" id="7.1.1.-" evidence="1"/>
<dbReference type="EMBL" id="CP000383">
    <property type="protein sequence ID" value="ABG58653.1"/>
    <property type="molecule type" value="Genomic_DNA"/>
</dbReference>
<dbReference type="RefSeq" id="WP_011584768.1">
    <property type="nucleotide sequence ID" value="NC_008255.1"/>
</dbReference>
<dbReference type="SMR" id="Q11VB3"/>
<dbReference type="STRING" id="269798.CHU_1381"/>
<dbReference type="KEGG" id="chu:CHU_1381"/>
<dbReference type="eggNOG" id="COG0377">
    <property type="taxonomic scope" value="Bacteria"/>
</dbReference>
<dbReference type="HOGENOM" id="CLU_055737_7_3_10"/>
<dbReference type="OrthoDB" id="9786737at2"/>
<dbReference type="Proteomes" id="UP000001822">
    <property type="component" value="Chromosome"/>
</dbReference>
<dbReference type="GO" id="GO:0005886">
    <property type="term" value="C:plasma membrane"/>
    <property type="evidence" value="ECO:0007669"/>
    <property type="project" value="UniProtKB-SubCell"/>
</dbReference>
<dbReference type="GO" id="GO:0045271">
    <property type="term" value="C:respiratory chain complex I"/>
    <property type="evidence" value="ECO:0007669"/>
    <property type="project" value="TreeGrafter"/>
</dbReference>
<dbReference type="GO" id="GO:0051539">
    <property type="term" value="F:4 iron, 4 sulfur cluster binding"/>
    <property type="evidence" value="ECO:0007669"/>
    <property type="project" value="UniProtKB-KW"/>
</dbReference>
<dbReference type="GO" id="GO:0005506">
    <property type="term" value="F:iron ion binding"/>
    <property type="evidence" value="ECO:0007669"/>
    <property type="project" value="UniProtKB-UniRule"/>
</dbReference>
<dbReference type="GO" id="GO:0008137">
    <property type="term" value="F:NADH dehydrogenase (ubiquinone) activity"/>
    <property type="evidence" value="ECO:0007669"/>
    <property type="project" value="InterPro"/>
</dbReference>
<dbReference type="GO" id="GO:0050136">
    <property type="term" value="F:NADH:ubiquinone reductase (non-electrogenic) activity"/>
    <property type="evidence" value="ECO:0007669"/>
    <property type="project" value="UniProtKB-UniRule"/>
</dbReference>
<dbReference type="GO" id="GO:0048038">
    <property type="term" value="F:quinone binding"/>
    <property type="evidence" value="ECO:0007669"/>
    <property type="project" value="UniProtKB-KW"/>
</dbReference>
<dbReference type="GO" id="GO:0009060">
    <property type="term" value="P:aerobic respiration"/>
    <property type="evidence" value="ECO:0007669"/>
    <property type="project" value="TreeGrafter"/>
</dbReference>
<dbReference type="GO" id="GO:0015990">
    <property type="term" value="P:electron transport coupled proton transport"/>
    <property type="evidence" value="ECO:0007669"/>
    <property type="project" value="TreeGrafter"/>
</dbReference>
<dbReference type="FunFam" id="3.40.50.12280:FF:000002">
    <property type="entry name" value="NADH-quinone oxidoreductase subunit B"/>
    <property type="match status" value="1"/>
</dbReference>
<dbReference type="Gene3D" id="3.40.50.12280">
    <property type="match status" value="1"/>
</dbReference>
<dbReference type="HAMAP" id="MF_01356">
    <property type="entry name" value="NDH1_NuoB"/>
    <property type="match status" value="1"/>
</dbReference>
<dbReference type="InterPro" id="IPR006137">
    <property type="entry name" value="NADH_UbQ_OxRdtase-like_20kDa"/>
</dbReference>
<dbReference type="InterPro" id="IPR006138">
    <property type="entry name" value="NADH_UQ_OxRdtase_20Kd_su"/>
</dbReference>
<dbReference type="NCBIfam" id="TIGR01957">
    <property type="entry name" value="nuoB_fam"/>
    <property type="match status" value="1"/>
</dbReference>
<dbReference type="NCBIfam" id="NF005012">
    <property type="entry name" value="PRK06411.1"/>
    <property type="match status" value="1"/>
</dbReference>
<dbReference type="NCBIfam" id="NF011395">
    <property type="entry name" value="PRK14820.1"/>
    <property type="match status" value="1"/>
</dbReference>
<dbReference type="PANTHER" id="PTHR11995">
    <property type="entry name" value="NADH DEHYDROGENASE"/>
    <property type="match status" value="1"/>
</dbReference>
<dbReference type="PANTHER" id="PTHR11995:SF14">
    <property type="entry name" value="NADH DEHYDROGENASE [UBIQUINONE] IRON-SULFUR PROTEIN 7, MITOCHONDRIAL"/>
    <property type="match status" value="1"/>
</dbReference>
<dbReference type="Pfam" id="PF01058">
    <property type="entry name" value="Oxidored_q6"/>
    <property type="match status" value="1"/>
</dbReference>
<dbReference type="SUPFAM" id="SSF56770">
    <property type="entry name" value="HydA/Nqo6-like"/>
    <property type="match status" value="1"/>
</dbReference>
<dbReference type="PROSITE" id="PS01150">
    <property type="entry name" value="COMPLEX1_20K"/>
    <property type="match status" value="1"/>
</dbReference>
<accession>Q11VB3</accession>
<keyword id="KW-0004">4Fe-4S</keyword>
<keyword id="KW-0997">Cell inner membrane</keyword>
<keyword id="KW-1003">Cell membrane</keyword>
<keyword id="KW-0408">Iron</keyword>
<keyword id="KW-0411">Iron-sulfur</keyword>
<keyword id="KW-0472">Membrane</keyword>
<keyword id="KW-0479">Metal-binding</keyword>
<keyword id="KW-0520">NAD</keyword>
<keyword id="KW-0874">Quinone</keyword>
<keyword id="KW-1185">Reference proteome</keyword>
<keyword id="KW-1278">Translocase</keyword>
<keyword id="KW-0813">Transport</keyword>
<protein>
    <recommendedName>
        <fullName evidence="1">NADH-quinone oxidoreductase subunit B 2</fullName>
        <ecNumber evidence="1">7.1.1.-</ecNumber>
    </recommendedName>
    <alternativeName>
        <fullName evidence="1">NADH dehydrogenase I subunit B 2</fullName>
    </alternativeName>
    <alternativeName>
        <fullName evidence="1">NDH-1 subunit B 2</fullName>
    </alternativeName>
</protein>
<sequence>MSDIKIEEKPDGLEGPGFFATSLDSVIGLARKNSLWPLPFATSCCGIEFMATMASTYDIARFGAERPSFSPRQADVLLVMGTIAKKMGPVLRHVYEQMAEPKWVVAVGACASSGGIFDTYSVLQGIDRIIPVDVYVPGCPPRPEQIIQGLMRVQDLASTESLRRRESPEYKALLAKYEIEE</sequence>
<evidence type="ECO:0000255" key="1">
    <source>
        <dbReference type="HAMAP-Rule" id="MF_01356"/>
    </source>
</evidence>
<reference key="1">
    <citation type="journal article" date="2007" name="Appl. Environ. Microbiol.">
        <title>Genome sequence of the cellulolytic gliding bacterium Cytophaga hutchinsonii.</title>
        <authorList>
            <person name="Xie G."/>
            <person name="Bruce D.C."/>
            <person name="Challacombe J.F."/>
            <person name="Chertkov O."/>
            <person name="Detter J.C."/>
            <person name="Gilna P."/>
            <person name="Han C.S."/>
            <person name="Lucas S."/>
            <person name="Misra M."/>
            <person name="Myers G.L."/>
            <person name="Richardson P."/>
            <person name="Tapia R."/>
            <person name="Thayer N."/>
            <person name="Thompson L.S."/>
            <person name="Brettin T.S."/>
            <person name="Henrissat B."/>
            <person name="Wilson D.B."/>
            <person name="McBride M.J."/>
        </authorList>
    </citation>
    <scope>NUCLEOTIDE SEQUENCE [LARGE SCALE GENOMIC DNA]</scope>
    <source>
        <strain>ATCC 33406 / DSM 1761 / JCM 20678 / CIP 103989 / IAM 12607 / NBRC 15051 / NCIMB 9469 / D465</strain>
    </source>
</reference>
<feature type="chain" id="PRO_0000358400" description="NADH-quinone oxidoreductase subunit B 2">
    <location>
        <begin position="1"/>
        <end position="181"/>
    </location>
</feature>
<feature type="binding site" evidence="1">
    <location>
        <position position="44"/>
    </location>
    <ligand>
        <name>[4Fe-4S] cluster</name>
        <dbReference type="ChEBI" id="CHEBI:49883"/>
    </ligand>
</feature>
<feature type="binding site" evidence="1">
    <location>
        <position position="45"/>
    </location>
    <ligand>
        <name>[4Fe-4S] cluster</name>
        <dbReference type="ChEBI" id="CHEBI:49883"/>
    </ligand>
</feature>
<feature type="binding site" evidence="1">
    <location>
        <position position="110"/>
    </location>
    <ligand>
        <name>[4Fe-4S] cluster</name>
        <dbReference type="ChEBI" id="CHEBI:49883"/>
    </ligand>
</feature>
<feature type="binding site" evidence="1">
    <location>
        <position position="139"/>
    </location>
    <ligand>
        <name>[4Fe-4S] cluster</name>
        <dbReference type="ChEBI" id="CHEBI:49883"/>
    </ligand>
</feature>
<proteinExistence type="inferred from homology"/>
<organism>
    <name type="scientific">Cytophaga hutchinsonii (strain ATCC 33406 / DSM 1761 / CIP 103989 / NBRC 15051 / NCIMB 9469 / D465)</name>
    <dbReference type="NCBI Taxonomy" id="269798"/>
    <lineage>
        <taxon>Bacteria</taxon>
        <taxon>Pseudomonadati</taxon>
        <taxon>Bacteroidota</taxon>
        <taxon>Cytophagia</taxon>
        <taxon>Cytophagales</taxon>
        <taxon>Cytophagaceae</taxon>
        <taxon>Cytophaga</taxon>
    </lineage>
</organism>
<name>NUOB2_CYTH3</name>
<comment type="function">
    <text evidence="1">NDH-1 shuttles electrons from NADH, via FMN and iron-sulfur (Fe-S) centers, to quinones in the respiratory chain. The immediate electron acceptor for the enzyme in this species is believed to be a menaquinone. Couples the redox reaction to proton translocation (for every two electrons transferred, four hydrogen ions are translocated across the cytoplasmic membrane), and thus conserves the redox energy in a proton gradient.</text>
</comment>
<comment type="catalytic activity">
    <reaction evidence="1">
        <text>a quinone + NADH + 5 H(+)(in) = a quinol + NAD(+) + 4 H(+)(out)</text>
        <dbReference type="Rhea" id="RHEA:57888"/>
        <dbReference type="ChEBI" id="CHEBI:15378"/>
        <dbReference type="ChEBI" id="CHEBI:24646"/>
        <dbReference type="ChEBI" id="CHEBI:57540"/>
        <dbReference type="ChEBI" id="CHEBI:57945"/>
        <dbReference type="ChEBI" id="CHEBI:132124"/>
    </reaction>
</comment>
<comment type="cofactor">
    <cofactor evidence="1">
        <name>[4Fe-4S] cluster</name>
        <dbReference type="ChEBI" id="CHEBI:49883"/>
    </cofactor>
    <text evidence="1">Binds 1 [4Fe-4S] cluster.</text>
</comment>
<comment type="subunit">
    <text evidence="1">NDH-1 is composed of 14 different subunits. Subunits NuoB, C, D, E, F, and G constitute the peripheral sector of the complex.</text>
</comment>
<comment type="subcellular location">
    <subcellularLocation>
        <location evidence="1">Cell inner membrane</location>
        <topology evidence="1">Peripheral membrane protein</topology>
        <orientation evidence="1">Cytoplasmic side</orientation>
    </subcellularLocation>
</comment>
<comment type="similarity">
    <text evidence="1">Belongs to the complex I 20 kDa subunit family.</text>
</comment>
<gene>
    <name evidence="1" type="primary">nuoB2</name>
    <name type="ordered locus">CHU_1381</name>
</gene>